<proteinExistence type="evidence at protein level"/>
<protein>
    <recommendedName>
        <fullName>Serine--glyoxylate aminotransferase</fullName>
        <shortName>SGAT</shortName>
        <ecNumber>2.6.1.45</ecNumber>
    </recommendedName>
    <alternativeName>
        <fullName>Alanine--glyoxylate aminotransferase</fullName>
        <shortName>AGT</shortName>
        <ecNumber>2.6.1.44</ecNumber>
    </alternativeName>
</protein>
<feature type="chain" id="PRO_0000150236" description="Serine--glyoxylate aminotransferase">
    <location>
        <begin position="1" status="less than"/>
        <end position="78" status="greater than"/>
    </location>
</feature>
<feature type="non-consecutive residues" evidence="3">
    <location>
        <begin position="16"/>
        <end position="17"/>
    </location>
</feature>
<feature type="non-consecutive residues" evidence="3">
    <location>
        <begin position="24"/>
        <end position="25"/>
    </location>
</feature>
<feature type="non-consecutive residues" evidence="3">
    <location>
        <begin position="38"/>
        <end position="39"/>
    </location>
</feature>
<feature type="non-consecutive residues" evidence="3">
    <location>
        <begin position="44"/>
        <end position="45"/>
    </location>
</feature>
<feature type="non-consecutive residues" evidence="3">
    <location>
        <begin position="54"/>
        <end position="55"/>
    </location>
</feature>
<feature type="non-consecutive residues" evidence="3">
    <location>
        <begin position="58"/>
        <end position="59"/>
    </location>
</feature>
<feature type="non-consecutive residues" evidence="3">
    <location>
        <begin position="63"/>
        <end position="64"/>
    </location>
</feature>
<feature type="non-consecutive residues" evidence="3">
    <location>
        <begin position="72"/>
        <end position="73"/>
    </location>
</feature>
<feature type="non-terminal residue" evidence="3">
    <location>
        <position position="1"/>
    </location>
</feature>
<feature type="non-terminal residue" evidence="3">
    <location>
        <position position="78"/>
    </location>
</feature>
<keyword id="KW-0032">Aminotransferase</keyword>
<keyword id="KW-0903">Direct protein sequencing</keyword>
<keyword id="KW-0576">Peroxisome</keyword>
<keyword id="KW-0663">Pyridoxal phosphate</keyword>
<keyword id="KW-1185">Reference proteome</keyword>
<keyword id="KW-0808">Transferase</keyword>
<accession>P84188</accession>
<comment type="catalytic activity">
    <reaction evidence="2">
        <text>glyoxylate + L-serine = 3-hydroxypyruvate + glycine</text>
        <dbReference type="Rhea" id="RHEA:19125"/>
        <dbReference type="ChEBI" id="CHEBI:17180"/>
        <dbReference type="ChEBI" id="CHEBI:33384"/>
        <dbReference type="ChEBI" id="CHEBI:36655"/>
        <dbReference type="ChEBI" id="CHEBI:57305"/>
        <dbReference type="EC" id="2.6.1.45"/>
    </reaction>
</comment>
<comment type="catalytic activity">
    <reaction evidence="2">
        <text>glyoxylate + L-alanine = glycine + pyruvate</text>
        <dbReference type="Rhea" id="RHEA:24248"/>
        <dbReference type="ChEBI" id="CHEBI:15361"/>
        <dbReference type="ChEBI" id="CHEBI:36655"/>
        <dbReference type="ChEBI" id="CHEBI:57305"/>
        <dbReference type="ChEBI" id="CHEBI:57972"/>
        <dbReference type="EC" id="2.6.1.44"/>
    </reaction>
</comment>
<comment type="cofactor">
    <cofactor evidence="2">
        <name>pyridoxal 5'-phosphate</name>
        <dbReference type="ChEBI" id="CHEBI:597326"/>
    </cofactor>
</comment>
<comment type="activity regulation">
    <text evidence="2">Inhibited by aminooxyacetate.</text>
</comment>
<comment type="subunit">
    <text evidence="2">Homodimer.</text>
</comment>
<comment type="subcellular location">
    <subcellularLocation>
        <location evidence="2">Peroxisome</location>
    </subcellularLocation>
</comment>
<comment type="tissue specificity">
    <text evidence="2">Expressed in leaves but not in root tissue or seedlings.</text>
</comment>
<comment type="induction">
    <text evidence="2">By light.</text>
</comment>
<comment type="similarity">
    <text evidence="1">Belongs to the class-V pyridoxal-phosphate-dependent aminotransferase family.</text>
</comment>
<dbReference type="EC" id="2.6.1.45"/>
<dbReference type="EC" id="2.6.1.44"/>
<dbReference type="SMR" id="P84188"/>
<dbReference type="Proteomes" id="UP000019116">
    <property type="component" value="Unplaced"/>
</dbReference>
<dbReference type="GO" id="GO:0005777">
    <property type="term" value="C:peroxisome"/>
    <property type="evidence" value="ECO:0007669"/>
    <property type="project" value="UniProtKB-SubCell"/>
</dbReference>
<dbReference type="GO" id="GO:0008453">
    <property type="term" value="F:alanine-glyoxylate transaminase activity"/>
    <property type="evidence" value="ECO:0007669"/>
    <property type="project" value="UniProtKB-EC"/>
</dbReference>
<dbReference type="GO" id="GO:0050281">
    <property type="term" value="F:L-serine-glyoxylate transaminase activity"/>
    <property type="evidence" value="ECO:0007669"/>
    <property type="project" value="UniProtKB-EC"/>
</dbReference>
<name>SGAT_WHEAT</name>
<reference key="1">
    <citation type="journal article" date="2005" name="Acta Biochim. Pol.">
        <title>Some structural properties of plant serine:glyoxylate aminotransferase.</title>
        <authorList>
            <person name="Truszkiewicz W."/>
            <person name="Paszkowski A."/>
        </authorList>
    </citation>
    <scope>PROTEIN SEQUENCE</scope>
    <scope>CATALYTIC ACTIVITY</scope>
    <scope>COFACTOR</scope>
    <scope>ACTIVITY REGULATION</scope>
    <scope>SUBUNIT</scope>
    <scope>SUBCELLULAR LOCATION</scope>
    <scope>TISSUE SPECIFICITY</scope>
    <scope>INDUCTION</scope>
    <source>
        <strain>cv. Jasna</strain>
        <tissue>Leaf</tissue>
    </source>
</reference>
<organism>
    <name type="scientific">Triticum aestivum</name>
    <name type="common">Wheat</name>
    <dbReference type="NCBI Taxonomy" id="4565"/>
    <lineage>
        <taxon>Eukaryota</taxon>
        <taxon>Viridiplantae</taxon>
        <taxon>Streptophyta</taxon>
        <taxon>Embryophyta</taxon>
        <taxon>Tracheophyta</taxon>
        <taxon>Spermatophyta</taxon>
        <taxon>Magnoliopsida</taxon>
        <taxon>Liliopsida</taxon>
        <taxon>Poales</taxon>
        <taxon>Poaceae</taxon>
        <taxon>BOP clade</taxon>
        <taxon>Pooideae</taxon>
        <taxon>Triticodae</taxon>
        <taxon>Triticeae</taxon>
        <taxon>Triticinae</taxon>
        <taxon>Triticum</taxon>
    </lineage>
</organism>
<evidence type="ECO:0000255" key="1"/>
<evidence type="ECO:0000269" key="2">
    <source>
    </source>
</evidence>
<evidence type="ECO:0000303" key="3">
    <source>
    </source>
</evidence>
<sequence>HLFVPGPVNIPDQVLRTLLEDVKKLASRLRSDSQHTIKLLDAYRVFFDWKDYLKKVFRNVNTLLKDLGYPVKPLIPSR</sequence>